<organism>
    <name type="scientific">Thermus thermophilus (strain ATCC BAA-163 / DSM 7039 / HB27)</name>
    <dbReference type="NCBI Taxonomy" id="262724"/>
    <lineage>
        <taxon>Bacteria</taxon>
        <taxon>Thermotogati</taxon>
        <taxon>Deinococcota</taxon>
        <taxon>Deinococci</taxon>
        <taxon>Thermales</taxon>
        <taxon>Thermaceae</taxon>
        <taxon>Thermus</taxon>
    </lineage>
</organism>
<feature type="chain" id="PRO_0000131994" description="Cytidylate kinase">
    <location>
        <begin position="1"/>
        <end position="208"/>
    </location>
</feature>
<feature type="binding site" evidence="1">
    <location>
        <begin position="9"/>
        <end position="17"/>
    </location>
    <ligand>
        <name>ATP</name>
        <dbReference type="ChEBI" id="CHEBI:30616"/>
    </ligand>
</feature>
<keyword id="KW-0067">ATP-binding</keyword>
<keyword id="KW-0963">Cytoplasm</keyword>
<keyword id="KW-0418">Kinase</keyword>
<keyword id="KW-0547">Nucleotide-binding</keyword>
<keyword id="KW-0808">Transferase</keyword>
<gene>
    <name evidence="1" type="primary">cmk</name>
    <name type="ordered locus">TT_C0089</name>
</gene>
<accession>Q72LH0</accession>
<evidence type="ECO:0000255" key="1">
    <source>
        <dbReference type="HAMAP-Rule" id="MF_00238"/>
    </source>
</evidence>
<sequence>MRGIVTIDGPSASGKSSVARRVAAALGVPYLSSGLLYRAAAFLALRAGVDPGDEEGLLALLEGLGVRLLAQAEGNRVLADGEDLTPFLHTPEVDRVVSAVARLPGVRAWVNRRLKEVPPPFVAEGRDMGTAVFPEAAHKFYLTASPEVRAWRRARERPQAYEEVLRDLLRRDERDKAQSAPAPDALVLDTGGMTLDEVVAWVLAHIRR</sequence>
<name>KCY_THET2</name>
<proteinExistence type="inferred from homology"/>
<protein>
    <recommendedName>
        <fullName evidence="1">Cytidylate kinase</fullName>
        <shortName evidence="1">CK</shortName>
        <ecNumber evidence="1">2.7.4.25</ecNumber>
    </recommendedName>
    <alternativeName>
        <fullName evidence="1">Cytidine monophosphate kinase</fullName>
        <shortName evidence="1">CMP kinase</shortName>
    </alternativeName>
</protein>
<dbReference type="EC" id="2.7.4.25" evidence="1"/>
<dbReference type="EMBL" id="AE017221">
    <property type="protein sequence ID" value="AAS80437.1"/>
    <property type="molecule type" value="Genomic_DNA"/>
</dbReference>
<dbReference type="RefSeq" id="WP_011172546.1">
    <property type="nucleotide sequence ID" value="NC_005835.1"/>
</dbReference>
<dbReference type="SMR" id="Q72LH0"/>
<dbReference type="KEGG" id="tth:TT_C0089"/>
<dbReference type="eggNOG" id="COG0283">
    <property type="taxonomic scope" value="Bacteria"/>
</dbReference>
<dbReference type="HOGENOM" id="CLU_079959_0_0_0"/>
<dbReference type="OrthoDB" id="9807434at2"/>
<dbReference type="Proteomes" id="UP000000592">
    <property type="component" value="Chromosome"/>
</dbReference>
<dbReference type="GO" id="GO:0005737">
    <property type="term" value="C:cytoplasm"/>
    <property type="evidence" value="ECO:0007669"/>
    <property type="project" value="UniProtKB-SubCell"/>
</dbReference>
<dbReference type="GO" id="GO:0005524">
    <property type="term" value="F:ATP binding"/>
    <property type="evidence" value="ECO:0007669"/>
    <property type="project" value="UniProtKB-UniRule"/>
</dbReference>
<dbReference type="GO" id="GO:0036430">
    <property type="term" value="F:CMP kinase activity"/>
    <property type="evidence" value="ECO:0007669"/>
    <property type="project" value="RHEA"/>
</dbReference>
<dbReference type="GO" id="GO:0036431">
    <property type="term" value="F:dCMP kinase activity"/>
    <property type="evidence" value="ECO:0007669"/>
    <property type="project" value="RHEA"/>
</dbReference>
<dbReference type="GO" id="GO:0006220">
    <property type="term" value="P:pyrimidine nucleotide metabolic process"/>
    <property type="evidence" value="ECO:0007669"/>
    <property type="project" value="UniProtKB-UniRule"/>
</dbReference>
<dbReference type="CDD" id="cd02020">
    <property type="entry name" value="CMPK"/>
    <property type="match status" value="1"/>
</dbReference>
<dbReference type="Gene3D" id="3.40.50.300">
    <property type="entry name" value="P-loop containing nucleotide triphosphate hydrolases"/>
    <property type="match status" value="1"/>
</dbReference>
<dbReference type="HAMAP" id="MF_00238">
    <property type="entry name" value="Cytidyl_kinase_type1"/>
    <property type="match status" value="1"/>
</dbReference>
<dbReference type="InterPro" id="IPR003136">
    <property type="entry name" value="Cytidylate_kin"/>
</dbReference>
<dbReference type="InterPro" id="IPR011994">
    <property type="entry name" value="Cytidylate_kinase_dom"/>
</dbReference>
<dbReference type="InterPro" id="IPR027417">
    <property type="entry name" value="P-loop_NTPase"/>
</dbReference>
<dbReference type="NCBIfam" id="TIGR00017">
    <property type="entry name" value="cmk"/>
    <property type="match status" value="1"/>
</dbReference>
<dbReference type="Pfam" id="PF02224">
    <property type="entry name" value="Cytidylate_kin"/>
    <property type="match status" value="1"/>
</dbReference>
<dbReference type="SUPFAM" id="SSF52540">
    <property type="entry name" value="P-loop containing nucleoside triphosphate hydrolases"/>
    <property type="match status" value="1"/>
</dbReference>
<comment type="catalytic activity">
    <reaction evidence="1">
        <text>CMP + ATP = CDP + ADP</text>
        <dbReference type="Rhea" id="RHEA:11600"/>
        <dbReference type="ChEBI" id="CHEBI:30616"/>
        <dbReference type="ChEBI" id="CHEBI:58069"/>
        <dbReference type="ChEBI" id="CHEBI:60377"/>
        <dbReference type="ChEBI" id="CHEBI:456216"/>
        <dbReference type="EC" id="2.7.4.25"/>
    </reaction>
</comment>
<comment type="catalytic activity">
    <reaction evidence="1">
        <text>dCMP + ATP = dCDP + ADP</text>
        <dbReference type="Rhea" id="RHEA:25094"/>
        <dbReference type="ChEBI" id="CHEBI:30616"/>
        <dbReference type="ChEBI" id="CHEBI:57566"/>
        <dbReference type="ChEBI" id="CHEBI:58593"/>
        <dbReference type="ChEBI" id="CHEBI:456216"/>
        <dbReference type="EC" id="2.7.4.25"/>
    </reaction>
</comment>
<comment type="subcellular location">
    <subcellularLocation>
        <location evidence="1">Cytoplasm</location>
    </subcellularLocation>
</comment>
<comment type="similarity">
    <text evidence="1">Belongs to the cytidylate kinase family. Type 1 subfamily.</text>
</comment>
<reference key="1">
    <citation type="journal article" date="2004" name="Nat. Biotechnol.">
        <title>The genome sequence of the extreme thermophile Thermus thermophilus.</title>
        <authorList>
            <person name="Henne A."/>
            <person name="Brueggemann H."/>
            <person name="Raasch C."/>
            <person name="Wiezer A."/>
            <person name="Hartsch T."/>
            <person name="Liesegang H."/>
            <person name="Johann A."/>
            <person name="Lienard T."/>
            <person name="Gohl O."/>
            <person name="Martinez-Arias R."/>
            <person name="Jacobi C."/>
            <person name="Starkuviene V."/>
            <person name="Schlenczeck S."/>
            <person name="Dencker S."/>
            <person name="Huber R."/>
            <person name="Klenk H.-P."/>
            <person name="Kramer W."/>
            <person name="Merkl R."/>
            <person name="Gottschalk G."/>
            <person name="Fritz H.-J."/>
        </authorList>
    </citation>
    <scope>NUCLEOTIDE SEQUENCE [LARGE SCALE GENOMIC DNA]</scope>
    <source>
        <strain>ATCC BAA-163 / DSM 7039 / HB27</strain>
    </source>
</reference>